<sequence>MNARSTYPGDVAVTIPEVHPDLTALAPLLGTWSGKGSGEYPTIEPFDYTEEITFGHTGKPFLTYVQRTRAADDGRPLHAETGYLRAPTPNNVEWILAHPTGITEIQEGPLTADGDTLRMDLISTDIGRSESAKEVMAVGRSMQISGDTLTYTLRMAAVGRPLQHHLSAVLHRVSS</sequence>
<evidence type="ECO:0000255" key="1">
    <source>
        <dbReference type="HAMAP-Rule" id="MF_01297"/>
    </source>
</evidence>
<reference key="1">
    <citation type="submission" date="2007-02" db="EMBL/GenBank/DDBJ databases">
        <title>Complete sequence of Mycobacterium sp. JLS.</title>
        <authorList>
            <consortium name="US DOE Joint Genome Institute"/>
            <person name="Copeland A."/>
            <person name="Lucas S."/>
            <person name="Lapidus A."/>
            <person name="Barry K."/>
            <person name="Detter J.C."/>
            <person name="Glavina del Rio T."/>
            <person name="Hammon N."/>
            <person name="Israni S."/>
            <person name="Dalin E."/>
            <person name="Tice H."/>
            <person name="Pitluck S."/>
            <person name="Chain P."/>
            <person name="Malfatti S."/>
            <person name="Shin M."/>
            <person name="Vergez L."/>
            <person name="Schmutz J."/>
            <person name="Larimer F."/>
            <person name="Land M."/>
            <person name="Hauser L."/>
            <person name="Kyrpides N."/>
            <person name="Mikhailova N."/>
            <person name="Miller C.D."/>
            <person name="Anderson A.J."/>
            <person name="Sims R.C."/>
            <person name="Richardson P."/>
        </authorList>
    </citation>
    <scope>NUCLEOTIDE SEQUENCE [LARGE SCALE GENOMIC DNA]</scope>
    <source>
        <strain>JLS</strain>
    </source>
</reference>
<protein>
    <recommendedName>
        <fullName>Peroxynitrite isomerase 1</fullName>
        <ecNumber evidence="1">5.99.-.-</ecNumber>
    </recommendedName>
    <alternativeName>
        <fullName>Ferric nitrobindin</fullName>
        <shortName>Nb(III)</shortName>
    </alternativeName>
</protein>
<proteinExistence type="inferred from homology"/>
<accession>A3PTJ4</accession>
<gene>
    <name type="ordered locus">Mjls_0408</name>
</gene>
<name>NB1_MYCSJ</name>
<keyword id="KW-0349">Heme</keyword>
<keyword id="KW-0408">Iron</keyword>
<keyword id="KW-0413">Isomerase</keyword>
<keyword id="KW-0479">Metal-binding</keyword>
<dbReference type="EC" id="5.99.-.-" evidence="1"/>
<dbReference type="EMBL" id="CP000580">
    <property type="protein sequence ID" value="ABN96221.1"/>
    <property type="molecule type" value="Genomic_DNA"/>
</dbReference>
<dbReference type="SMR" id="A3PTJ4"/>
<dbReference type="KEGG" id="mjl:Mjls_0408"/>
<dbReference type="HOGENOM" id="CLU_085483_0_0_11"/>
<dbReference type="BioCyc" id="MSP164757:G1G8C-413-MONOMER"/>
<dbReference type="GO" id="GO:0020037">
    <property type="term" value="F:heme binding"/>
    <property type="evidence" value="ECO:0007669"/>
    <property type="project" value="UniProtKB-UniRule"/>
</dbReference>
<dbReference type="GO" id="GO:0046872">
    <property type="term" value="F:metal ion binding"/>
    <property type="evidence" value="ECO:0007669"/>
    <property type="project" value="UniProtKB-KW"/>
</dbReference>
<dbReference type="GO" id="GO:0062213">
    <property type="term" value="F:peroxynitrite isomerase activity"/>
    <property type="evidence" value="ECO:0007669"/>
    <property type="project" value="UniProtKB-UniRule"/>
</dbReference>
<dbReference type="CDD" id="cd07828">
    <property type="entry name" value="lipocalin_heme-bd-THAP4-like"/>
    <property type="match status" value="1"/>
</dbReference>
<dbReference type="Gene3D" id="2.40.128.20">
    <property type="match status" value="1"/>
</dbReference>
<dbReference type="HAMAP" id="MF_01297">
    <property type="entry name" value="nitrobindin"/>
    <property type="match status" value="1"/>
</dbReference>
<dbReference type="InterPro" id="IPR012674">
    <property type="entry name" value="Calycin"/>
</dbReference>
<dbReference type="InterPro" id="IPR022939">
    <property type="entry name" value="Nb(III)_bact/plant"/>
</dbReference>
<dbReference type="InterPro" id="IPR045165">
    <property type="entry name" value="Nitrobindin"/>
</dbReference>
<dbReference type="InterPro" id="IPR054873">
    <property type="entry name" value="PeroxynitIsom"/>
</dbReference>
<dbReference type="InterPro" id="IPR014878">
    <property type="entry name" value="THAP4-like_heme-bd"/>
</dbReference>
<dbReference type="NCBIfam" id="NF045819">
    <property type="entry name" value="PeroxynitIsom"/>
    <property type="match status" value="1"/>
</dbReference>
<dbReference type="PANTHER" id="PTHR15854:SF4">
    <property type="entry name" value="PEROXYNITRITE ISOMERASE THAP4"/>
    <property type="match status" value="1"/>
</dbReference>
<dbReference type="PANTHER" id="PTHR15854">
    <property type="entry name" value="THAP4 PROTEIN"/>
    <property type="match status" value="1"/>
</dbReference>
<dbReference type="Pfam" id="PF08768">
    <property type="entry name" value="THAP4_heme-bd"/>
    <property type="match status" value="1"/>
</dbReference>
<dbReference type="SUPFAM" id="SSF50814">
    <property type="entry name" value="Lipocalins"/>
    <property type="match status" value="1"/>
</dbReference>
<feature type="chain" id="PRO_0000356928" description="Peroxynitrite isomerase 1">
    <location>
        <begin position="1"/>
        <end position="175"/>
    </location>
</feature>
<feature type="short sequence motif" description="GXWXGXG" evidence="1">
    <location>
        <begin position="30"/>
        <end position="36"/>
    </location>
</feature>
<feature type="binding site" description="axial binding residue" evidence="1">
    <location>
        <position position="165"/>
    </location>
    <ligand>
        <name>heme b</name>
        <dbReference type="ChEBI" id="CHEBI:60344"/>
    </ligand>
    <ligandPart>
        <name>Fe</name>
        <dbReference type="ChEBI" id="CHEBI:18248"/>
    </ligandPart>
</feature>
<comment type="function">
    <text evidence="1">Heme-binding protein able to scavenge peroxynitrite and to protect free L-tyrosine against peroxynitrite-mediated nitration, by acting as a peroxynitrite isomerase that converts peroxynitrite to nitrate. Therefore, this protein likely plays a role in peroxynitrite sensing and in the detoxification of reactive nitrogen and oxygen species (RNS and ROS, respectively). Is able to bind nitric oxide (NO) in vitro, but may act as a sensor of peroxynitrite levels in vivo.</text>
</comment>
<comment type="catalytic activity">
    <reaction evidence="1">
        <text>peroxynitrite = nitrate</text>
        <dbReference type="Rhea" id="RHEA:63116"/>
        <dbReference type="ChEBI" id="CHEBI:17632"/>
        <dbReference type="ChEBI" id="CHEBI:25941"/>
    </reaction>
    <physiologicalReaction direction="left-to-right" evidence="1">
        <dbReference type="Rhea" id="RHEA:63117"/>
    </physiologicalReaction>
</comment>
<comment type="cofactor">
    <cofactor evidence="1">
        <name>heme b</name>
        <dbReference type="ChEBI" id="CHEBI:60344"/>
    </cofactor>
    <text evidence="1">Binds 1 heme b group per subunit, that coordinates a highly solvent-exposed Fe(III) atom.</text>
</comment>
<comment type="pathway">
    <text evidence="1">Nitrogen metabolism.</text>
</comment>
<comment type="subunit">
    <text evidence="1">Homodimer.</text>
</comment>
<comment type="domain">
    <text evidence="1">Forms a 10-stranded antiparallel beta-barrel structure able to accommodate a hydrophobic ligand in its interior. In fact, this fold hosts the heme group, which is located in a wide surface cleft.</text>
</comment>
<comment type="similarity">
    <text evidence="1">Belongs to the nitrobindin family.</text>
</comment>
<organism>
    <name type="scientific">Mycobacterium sp. (strain JLS)</name>
    <dbReference type="NCBI Taxonomy" id="164757"/>
    <lineage>
        <taxon>Bacteria</taxon>
        <taxon>Bacillati</taxon>
        <taxon>Actinomycetota</taxon>
        <taxon>Actinomycetes</taxon>
        <taxon>Mycobacteriales</taxon>
        <taxon>Mycobacteriaceae</taxon>
        <taxon>Mycobacterium</taxon>
    </lineage>
</organism>